<proteinExistence type="evidence at transcript level"/>
<reference key="1">
    <citation type="journal article" date="2005" name="BMC Genomics">
        <title>Characterization of 954 bovine full-CDS cDNA sequences.</title>
        <authorList>
            <person name="Harhay G.P."/>
            <person name="Sonstegard T.S."/>
            <person name="Keele J.W."/>
            <person name="Heaton M.P."/>
            <person name="Clawson M.L."/>
            <person name="Snelling W.M."/>
            <person name="Wiedmann R.T."/>
            <person name="Van Tassell C.P."/>
            <person name="Smith T.P.L."/>
        </authorList>
    </citation>
    <scope>NUCLEOTIDE SEQUENCE [LARGE SCALE MRNA]</scope>
</reference>
<reference key="2">
    <citation type="submission" date="2007-06" db="EMBL/GenBank/DDBJ databases">
        <authorList>
            <consortium name="NIH - Mammalian Gene Collection (MGC) project"/>
        </authorList>
    </citation>
    <scope>NUCLEOTIDE SEQUENCE [LARGE SCALE MRNA]</scope>
    <source>
        <strain>Hereford</strain>
        <tissue>Thymus</tissue>
    </source>
</reference>
<name>PRUN1_BOVIN</name>
<gene>
    <name type="primary">PRUNE1</name>
    <name type="synonym">PRUNE</name>
</gene>
<sequence length="453" mass="50080">MENYLQGCRAALQESRPIHVVLGNEACDLDSMVSALALAFYLAKTTEAEEVFVPVLNIKRSELPLRGDNVFFLQKIHIPESVLIFRDEIDLHALHQAGQLTLILVDHHVLPKSDAALEEAVAEVLDHRPIDQRHCPPCHVSVELVGSCATLVAERILQGAPEILDRQTAALLHGTILLDCVNMDLKIGKATLKDSHYVEKLEALFPDLPSRNDIFDSLQKAKFDVSGLTTEQMLRKDQKTISRQGTKVAISAIYMDMEAFLQRSGLLADLRAFCQAHSYDALVAMTIFFNTYNEPVRQLAVFCPHAALRMTICGILEHSHSPPLKLTPVPSSHPDLQAYLQGNTQISRKKVLPLLQEALSAYFDSTNIPLGQPETEGVSREQVDKELDRAGNSLLSGLSQDEEEPPLPPTPMNSLVDECPLDQGLPKFSAEVIFEKCSQISLSEPTTASLSKK</sequence>
<comment type="function">
    <text evidence="1">Phosphodiesterase (PDE) that has higher activity toward cAMP than cGMP, as substrate. Plays a role in cell proliferation, is able to induce cell motility and acts as a negative regulator of NME1 (By similarity).</text>
</comment>
<comment type="catalytic activity">
    <reaction>
        <text>diphosphate + H2O = 2 phosphate + H(+)</text>
        <dbReference type="Rhea" id="RHEA:24576"/>
        <dbReference type="ChEBI" id="CHEBI:15377"/>
        <dbReference type="ChEBI" id="CHEBI:15378"/>
        <dbReference type="ChEBI" id="CHEBI:33019"/>
        <dbReference type="ChEBI" id="CHEBI:43474"/>
        <dbReference type="EC" id="3.6.1.1"/>
    </reaction>
</comment>
<comment type="cofactor">
    <cofactor evidence="1">
        <name>Mn(2+)</name>
        <dbReference type="ChEBI" id="CHEBI:29035"/>
    </cofactor>
    <text evidence="1">Binds 2 manganese ions per subunit.</text>
</comment>
<comment type="activity regulation">
    <text evidence="1">Activated by magnesium ions and inhibited by manganese ions. Inhibited by dipyridamole, moderately sensitive to IBMX and inhibited by vinpocetine (By similarity).</text>
</comment>
<comment type="subunit">
    <text evidence="1">Homooligomer. Able to homodimerize via its C-terminal domain. Interacts with NME1. Interacts with GSK3; at focal adhesion complexes where paxillin and vinculin are colocalized.</text>
</comment>
<comment type="subcellular location">
    <subcellularLocation>
        <location evidence="1">Cytoplasm</location>
    </subcellularLocation>
    <subcellularLocation>
        <location evidence="1">Nucleus</location>
    </subcellularLocation>
    <subcellularLocation>
        <location evidence="1">Cell junction</location>
        <location evidence="1">Focal adhesion</location>
    </subcellularLocation>
</comment>
<comment type="similarity">
    <text evidence="5">Belongs to the PPase class C family. Prune subfamily.</text>
</comment>
<organism>
    <name type="scientific">Bos taurus</name>
    <name type="common">Bovine</name>
    <dbReference type="NCBI Taxonomy" id="9913"/>
    <lineage>
        <taxon>Eukaryota</taxon>
        <taxon>Metazoa</taxon>
        <taxon>Chordata</taxon>
        <taxon>Craniata</taxon>
        <taxon>Vertebrata</taxon>
        <taxon>Euteleostomi</taxon>
        <taxon>Mammalia</taxon>
        <taxon>Eutheria</taxon>
        <taxon>Laurasiatheria</taxon>
        <taxon>Artiodactyla</taxon>
        <taxon>Ruminantia</taxon>
        <taxon>Pecora</taxon>
        <taxon>Bovidae</taxon>
        <taxon>Bovinae</taxon>
        <taxon>Bos</taxon>
    </lineage>
</organism>
<accession>Q5E9Y6</accession>
<dbReference type="EC" id="3.6.1.1"/>
<dbReference type="EMBL" id="BT020783">
    <property type="protein sequence ID" value="AAX08800.1"/>
    <property type="molecule type" value="mRNA"/>
</dbReference>
<dbReference type="EMBL" id="BC142289">
    <property type="protein sequence ID" value="AAI42290.1"/>
    <property type="molecule type" value="mRNA"/>
</dbReference>
<dbReference type="RefSeq" id="NP_001030429.1">
    <property type="nucleotide sequence ID" value="NM_001035352.1"/>
</dbReference>
<dbReference type="SMR" id="Q5E9Y6"/>
<dbReference type="FunCoup" id="Q5E9Y6">
    <property type="interactions" value="1013"/>
</dbReference>
<dbReference type="STRING" id="9913.ENSBTAP00000062223"/>
<dbReference type="PaxDb" id="9913-ENSBTAP00000020388"/>
<dbReference type="GeneID" id="524973"/>
<dbReference type="KEGG" id="bta:524973"/>
<dbReference type="CTD" id="58497"/>
<dbReference type="VEuPathDB" id="HostDB:ENSBTAG00000015336"/>
<dbReference type="eggNOG" id="KOG4129">
    <property type="taxonomic scope" value="Eukaryota"/>
</dbReference>
<dbReference type="HOGENOM" id="CLU_019358_2_0_1"/>
<dbReference type="InParanoid" id="Q5E9Y6"/>
<dbReference type="OMA" id="TMTIFFN"/>
<dbReference type="OrthoDB" id="374045at2759"/>
<dbReference type="TreeFam" id="TF323914"/>
<dbReference type="Proteomes" id="UP000009136">
    <property type="component" value="Chromosome 3"/>
</dbReference>
<dbReference type="Bgee" id="ENSBTAG00000015336">
    <property type="expression patterns" value="Expressed in biceps femoris and 106 other cell types or tissues"/>
</dbReference>
<dbReference type="GO" id="GO:0005737">
    <property type="term" value="C:cytoplasm"/>
    <property type="evidence" value="ECO:0000318"/>
    <property type="project" value="GO_Central"/>
</dbReference>
<dbReference type="GO" id="GO:0005925">
    <property type="term" value="C:focal adhesion"/>
    <property type="evidence" value="ECO:0007669"/>
    <property type="project" value="UniProtKB-SubCell"/>
</dbReference>
<dbReference type="GO" id="GO:0005634">
    <property type="term" value="C:nucleus"/>
    <property type="evidence" value="ECO:0007669"/>
    <property type="project" value="UniProtKB-SubCell"/>
</dbReference>
<dbReference type="GO" id="GO:0004309">
    <property type="term" value="F:exopolyphosphatase activity"/>
    <property type="evidence" value="ECO:0000318"/>
    <property type="project" value="GO_Central"/>
</dbReference>
<dbReference type="GO" id="GO:0004427">
    <property type="term" value="F:inorganic diphosphate phosphatase activity"/>
    <property type="evidence" value="ECO:0007669"/>
    <property type="project" value="UniProtKB-EC"/>
</dbReference>
<dbReference type="GO" id="GO:0046872">
    <property type="term" value="F:metal ion binding"/>
    <property type="evidence" value="ECO:0007669"/>
    <property type="project" value="UniProtKB-KW"/>
</dbReference>
<dbReference type="FunFam" id="3.10.310.20:FF:000003">
    <property type="entry name" value="Prune exopolyphosphatase 1"/>
    <property type="match status" value="1"/>
</dbReference>
<dbReference type="FunFam" id="3.90.1640.10:FF:000004">
    <property type="entry name" value="Prune exopolyphosphatase 1"/>
    <property type="match status" value="1"/>
</dbReference>
<dbReference type="Gene3D" id="3.10.310.20">
    <property type="entry name" value="DHHA2 domain"/>
    <property type="match status" value="1"/>
</dbReference>
<dbReference type="Gene3D" id="3.90.1640.10">
    <property type="entry name" value="inorganic pyrophosphatase (n-terminal core)"/>
    <property type="match status" value="1"/>
</dbReference>
<dbReference type="InterPro" id="IPR001667">
    <property type="entry name" value="DDH_dom"/>
</dbReference>
<dbReference type="InterPro" id="IPR038763">
    <property type="entry name" value="DHH_sf"/>
</dbReference>
<dbReference type="InterPro" id="IPR004097">
    <property type="entry name" value="DHHA2"/>
</dbReference>
<dbReference type="InterPro" id="IPR038222">
    <property type="entry name" value="DHHA2_dom_sf"/>
</dbReference>
<dbReference type="PANTHER" id="PTHR12112">
    <property type="entry name" value="BNIP - RELATED"/>
    <property type="match status" value="1"/>
</dbReference>
<dbReference type="PANTHER" id="PTHR12112:SF47">
    <property type="entry name" value="EXOPOLYPHOSPHATASE PRUNE1"/>
    <property type="match status" value="1"/>
</dbReference>
<dbReference type="Pfam" id="PF01368">
    <property type="entry name" value="DHH"/>
    <property type="match status" value="1"/>
</dbReference>
<dbReference type="Pfam" id="PF02833">
    <property type="entry name" value="DHHA2"/>
    <property type="match status" value="1"/>
</dbReference>
<dbReference type="SMART" id="SM01131">
    <property type="entry name" value="DHHA2"/>
    <property type="match status" value="1"/>
</dbReference>
<dbReference type="SUPFAM" id="SSF64182">
    <property type="entry name" value="DHH phosphoesterases"/>
    <property type="match status" value="1"/>
</dbReference>
<evidence type="ECO:0000250" key="1"/>
<evidence type="ECO:0000250" key="2">
    <source>
        <dbReference type="UniProtKB" id="Q86TP1"/>
    </source>
</evidence>
<evidence type="ECO:0000250" key="3">
    <source>
        <dbReference type="UniProtKB" id="Q8BIW1"/>
    </source>
</evidence>
<evidence type="ECO:0000256" key="4">
    <source>
        <dbReference type="SAM" id="MobiDB-lite"/>
    </source>
</evidence>
<evidence type="ECO:0000305" key="5"/>
<feature type="chain" id="PRO_0000337986" description="Exopolyphosphatase PRUNE1">
    <location>
        <begin position="1"/>
        <end position="453"/>
    </location>
</feature>
<feature type="region of interest" description="Essential for homodimerization" evidence="1">
    <location>
        <begin position="393"/>
        <end position="420"/>
    </location>
</feature>
<feature type="region of interest" description="Disordered" evidence="4">
    <location>
        <begin position="396"/>
        <end position="419"/>
    </location>
</feature>
<feature type="short sequence motif" description="DHH motif" evidence="1">
    <location>
        <begin position="106"/>
        <end position="108"/>
    </location>
</feature>
<feature type="binding site" evidence="1">
    <location>
        <position position="28"/>
    </location>
    <ligand>
        <name>Mn(2+)</name>
        <dbReference type="ChEBI" id="CHEBI:29035"/>
        <label>1</label>
    </ligand>
</feature>
<feature type="binding site" evidence="1">
    <location>
        <position position="30"/>
    </location>
    <ligand>
        <name>Mn(2+)</name>
        <dbReference type="ChEBI" id="CHEBI:29035"/>
        <label>2</label>
    </ligand>
</feature>
<feature type="binding site" evidence="1">
    <location>
        <position position="106"/>
    </location>
    <ligand>
        <name>Mn(2+)</name>
        <dbReference type="ChEBI" id="CHEBI:29035"/>
        <label>1</label>
    </ligand>
</feature>
<feature type="binding site" evidence="1">
    <location>
        <position position="106"/>
    </location>
    <ligand>
        <name>Mn(2+)</name>
        <dbReference type="ChEBI" id="CHEBI:29035"/>
        <label>2</label>
    </ligand>
</feature>
<feature type="binding site" evidence="1">
    <location>
        <position position="179"/>
    </location>
    <ligand>
        <name>Mn(2+)</name>
        <dbReference type="ChEBI" id="CHEBI:29035"/>
        <label>2</label>
    </ligand>
</feature>
<feature type="modified residue" description="N-acetylmethionine" evidence="2">
    <location>
        <position position="1"/>
    </location>
</feature>
<feature type="modified residue" description="Phosphoserine" evidence="3">
    <location>
        <position position="399"/>
    </location>
</feature>
<feature type="modified residue" description="Phosphothreonine" evidence="3">
    <location>
        <position position="410"/>
    </location>
</feature>
<feature type="modified residue" description="Phosphoserine" evidence="3">
    <location>
        <position position="414"/>
    </location>
</feature>
<keyword id="KW-0007">Acetylation</keyword>
<keyword id="KW-0965">Cell junction</keyword>
<keyword id="KW-0963">Cytoplasm</keyword>
<keyword id="KW-0378">Hydrolase</keyword>
<keyword id="KW-0464">Manganese</keyword>
<keyword id="KW-0479">Metal-binding</keyword>
<keyword id="KW-0539">Nucleus</keyword>
<keyword id="KW-0597">Phosphoprotein</keyword>
<keyword id="KW-1185">Reference proteome</keyword>
<protein>
    <recommendedName>
        <fullName>Exopolyphosphatase PRUNE1</fullName>
        <ecNumber>3.6.1.1</ecNumber>
    </recommendedName>
</protein>